<organism>
    <name type="scientific">Escherichia coli O139:H28 (strain E24377A / ETEC)</name>
    <dbReference type="NCBI Taxonomy" id="331111"/>
    <lineage>
        <taxon>Bacteria</taxon>
        <taxon>Pseudomonadati</taxon>
        <taxon>Pseudomonadota</taxon>
        <taxon>Gammaproteobacteria</taxon>
        <taxon>Enterobacterales</taxon>
        <taxon>Enterobacteriaceae</taxon>
        <taxon>Escherichia</taxon>
    </lineage>
</organism>
<comment type="function">
    <text evidence="1">A GTPase-activating protein (GAP) that modifies Der/EngA GTPase function. May play a role in ribosome biogenesis.</text>
</comment>
<comment type="subunit">
    <text evidence="1">Interacts with Der.</text>
</comment>
<comment type="similarity">
    <text evidence="1">Belongs to the YihI family.</text>
</comment>
<sequence length="169" mass="19059">MKPSSSNSRSKGHAKARRKTREELDQEARDRKRQKKRRGHAPGSRAAGGNTTSGSKGQNAPKDPRIGSKTPIPLGVTEKVTKQHKPKSEKPMLSPQAELELLETDERLDALLERLEAGETLSAEEQSWVDAKLDRIDELMQKLGLSYDDDEEEEEDEKQEDMMRLLRGN</sequence>
<evidence type="ECO:0000255" key="1">
    <source>
        <dbReference type="HAMAP-Rule" id="MF_01058"/>
    </source>
</evidence>
<evidence type="ECO:0000256" key="2">
    <source>
        <dbReference type="SAM" id="MobiDB-lite"/>
    </source>
</evidence>
<dbReference type="EMBL" id="CP000800">
    <property type="protein sequence ID" value="ABV19516.1"/>
    <property type="molecule type" value="Genomic_DNA"/>
</dbReference>
<dbReference type="RefSeq" id="WP_001295266.1">
    <property type="nucleotide sequence ID" value="NC_009801.1"/>
</dbReference>
<dbReference type="SMR" id="A7ZU67"/>
<dbReference type="GeneID" id="75204333"/>
<dbReference type="KEGG" id="ecw:EcE24377A_4384"/>
<dbReference type="HOGENOM" id="CLU_094104_2_0_6"/>
<dbReference type="Proteomes" id="UP000001122">
    <property type="component" value="Chromosome"/>
</dbReference>
<dbReference type="GO" id="GO:0005096">
    <property type="term" value="F:GTPase activator activity"/>
    <property type="evidence" value="ECO:0007669"/>
    <property type="project" value="UniProtKB-KW"/>
</dbReference>
<dbReference type="GO" id="GO:0042254">
    <property type="term" value="P:ribosome biogenesis"/>
    <property type="evidence" value="ECO:0007669"/>
    <property type="project" value="UniProtKB-KW"/>
</dbReference>
<dbReference type="HAMAP" id="MF_01058">
    <property type="entry name" value="GAP_YihI"/>
    <property type="match status" value="1"/>
</dbReference>
<dbReference type="InterPro" id="IPR007336">
    <property type="entry name" value="YihI"/>
</dbReference>
<dbReference type="NCBIfam" id="NF003560">
    <property type="entry name" value="PRK05244.1-1"/>
    <property type="match status" value="1"/>
</dbReference>
<dbReference type="Pfam" id="PF04220">
    <property type="entry name" value="YihI"/>
    <property type="match status" value="1"/>
</dbReference>
<feature type="chain" id="PRO_1000064419" description="Der GTPase-activating protein YihI">
    <location>
        <begin position="1"/>
        <end position="169"/>
    </location>
</feature>
<feature type="region of interest" description="Disordered" evidence="2">
    <location>
        <begin position="1"/>
        <end position="98"/>
    </location>
</feature>
<feature type="region of interest" description="Disordered" evidence="2">
    <location>
        <begin position="144"/>
        <end position="169"/>
    </location>
</feature>
<feature type="compositionally biased region" description="Basic residues" evidence="2">
    <location>
        <begin position="10"/>
        <end position="19"/>
    </location>
</feature>
<feature type="compositionally biased region" description="Basic and acidic residues" evidence="2">
    <location>
        <begin position="20"/>
        <end position="30"/>
    </location>
</feature>
<feature type="compositionally biased region" description="Basic residues" evidence="2">
    <location>
        <begin position="31"/>
        <end position="40"/>
    </location>
</feature>
<feature type="compositionally biased region" description="Polar residues" evidence="2">
    <location>
        <begin position="49"/>
        <end position="58"/>
    </location>
</feature>
<feature type="compositionally biased region" description="Acidic residues" evidence="2">
    <location>
        <begin position="147"/>
        <end position="159"/>
    </location>
</feature>
<feature type="compositionally biased region" description="Basic and acidic residues" evidence="2">
    <location>
        <begin position="160"/>
        <end position="169"/>
    </location>
</feature>
<reference key="1">
    <citation type="journal article" date="2008" name="J. Bacteriol.">
        <title>The pangenome structure of Escherichia coli: comparative genomic analysis of E. coli commensal and pathogenic isolates.</title>
        <authorList>
            <person name="Rasko D.A."/>
            <person name="Rosovitz M.J."/>
            <person name="Myers G.S.A."/>
            <person name="Mongodin E.F."/>
            <person name="Fricke W.F."/>
            <person name="Gajer P."/>
            <person name="Crabtree J."/>
            <person name="Sebaihia M."/>
            <person name="Thomson N.R."/>
            <person name="Chaudhuri R."/>
            <person name="Henderson I.R."/>
            <person name="Sperandio V."/>
            <person name="Ravel J."/>
        </authorList>
    </citation>
    <scope>NUCLEOTIDE SEQUENCE [LARGE SCALE GENOMIC DNA]</scope>
    <source>
        <strain>E24377A / ETEC</strain>
    </source>
</reference>
<protein>
    <recommendedName>
        <fullName evidence="1">Der GTPase-activating protein YihI</fullName>
    </recommendedName>
</protein>
<proteinExistence type="inferred from homology"/>
<keyword id="KW-0343">GTPase activation</keyword>
<keyword id="KW-1185">Reference proteome</keyword>
<keyword id="KW-0690">Ribosome biogenesis</keyword>
<name>YIHI_ECO24</name>
<accession>A7ZU67</accession>
<gene>
    <name evidence="1" type="primary">yihI</name>
    <name type="ordered locus">EcE24377A_4384</name>
</gene>